<feature type="chain" id="PRO_0000222215" description="Replication-associated protein A">
    <location>
        <begin position="1"/>
        <end position="295"/>
    </location>
</feature>
<feature type="domain" description="CRESS-DNA virus Rep endonuclease" evidence="2">
    <location>
        <begin position="12"/>
        <end position="114"/>
    </location>
</feature>
<feature type="region of interest" description="Oligomerization" evidence="1">
    <location>
        <begin position="163"/>
        <end position="175"/>
    </location>
</feature>
<feature type="region of interest" description="Disordered" evidence="3">
    <location>
        <begin position="232"/>
        <end position="295"/>
    </location>
</feature>
<feature type="short sequence motif" description="RCR-1" evidence="2">
    <location>
        <begin position="19"/>
        <end position="22"/>
    </location>
</feature>
<feature type="short sequence motif" description="RCR-2" evidence="2">
    <location>
        <begin position="61"/>
        <end position="63"/>
    </location>
</feature>
<feature type="short sequence motif" description="RCR-3" evidence="2">
    <location>
        <begin position="101"/>
        <end position="104"/>
    </location>
</feature>
<feature type="short sequence motif" description="LXCXE motif, interaction with host RBR1" evidence="1">
    <location>
        <begin position="184"/>
        <end position="188"/>
    </location>
</feature>
<feature type="compositionally biased region" description="Low complexity" evidence="3">
    <location>
        <begin position="267"/>
        <end position="295"/>
    </location>
</feature>
<feature type="active site" description="For DNA cleavage activity" evidence="2">
    <location>
        <position position="101"/>
    </location>
</feature>
<feature type="binding site" evidence="2">
    <location>
        <position position="53"/>
    </location>
    <ligand>
        <name>a divalent metal cation</name>
        <dbReference type="ChEBI" id="CHEBI:60240"/>
    </ligand>
</feature>
<feature type="binding site" evidence="2">
    <location>
        <position position="61"/>
    </location>
    <ligand>
        <name>a divalent metal cation</name>
        <dbReference type="ChEBI" id="CHEBI:60240"/>
    </ligand>
</feature>
<feature type="binding site" evidence="2">
    <location>
        <position position="63"/>
    </location>
    <ligand>
        <name>a divalent metal cation</name>
        <dbReference type="ChEBI" id="CHEBI:60240"/>
    </ligand>
</feature>
<feature type="binding site" evidence="2">
    <location>
        <position position="105"/>
    </location>
    <ligand>
        <name>a divalent metal cation</name>
        <dbReference type="ChEBI" id="CHEBI:60240"/>
    </ligand>
</feature>
<evidence type="ECO:0000250" key="1"/>
<evidence type="ECO:0000255" key="2">
    <source>
        <dbReference type="PROSITE-ProRule" id="PRU01364"/>
    </source>
</evidence>
<evidence type="ECO:0000256" key="3">
    <source>
        <dbReference type="SAM" id="MobiDB-lite"/>
    </source>
</evidence>
<evidence type="ECO:0000305" key="4"/>
<comment type="function">
    <text evidence="1">Implicated in enhancement of V-sense gene expression. Acts a an inhibitor of C-sense gene transcription (By similarity).</text>
</comment>
<comment type="cofactor">
    <cofactor evidence="2">
        <name>Mg(2+)</name>
        <dbReference type="ChEBI" id="CHEBI:18420"/>
    </cofactor>
    <cofactor evidence="2">
        <name>Mn(2+)</name>
        <dbReference type="ChEBI" id="CHEBI:29035"/>
    </cofactor>
    <text evidence="2">Divalent metal cations, possibly Mg(2+) or Mn(2+).</text>
</comment>
<comment type="subunit">
    <text evidence="1">Homooligomer. Interacts (via LXCXE domain) with host retinoblastoma-related protein 1 (RBR1), and may thereby deregulate the host cell cycle. Part of the C- and V-complexes which are RepA-Rep-DNA complexes involved in the c-sense and v-sense transcription (By similarity).</text>
</comment>
<comment type="subcellular location">
    <subcellularLocation>
        <location evidence="1">Host nucleus</location>
    </subcellularLocation>
    <subcellularLocation>
        <location evidence="1">Host cytoplasm</location>
    </subcellularLocation>
</comment>
<comment type="alternative products">
    <event type="alternative splicing"/>
    <isoform>
        <id>P31617-1</id>
        <name>RepA</name>
        <sequence type="displayed"/>
    </isoform>
    <isoform>
        <id>P31618-1</id>
        <name>Rep</name>
        <sequence type="external"/>
    </isoform>
</comment>
<comment type="domain">
    <text>There are 3 rolling circle replication (RCR) motifs. RCR-2 may be involved in metal coordination. RCR-3 is required for phosphodiester bond cleavage for initiation of RCR.</text>
</comment>
<comment type="domain">
    <text evidence="1">The LXCXE motif specifically binds to host RBR1.</text>
</comment>
<comment type="miscellaneous">
    <molecule>Isoform RepA</molecule>
    <text>Produced from the unspliced transcript.</text>
</comment>
<comment type="similarity">
    <text evidence="4">Belongs to the geminiviridae Rep protein family.</text>
</comment>
<reference key="1">
    <citation type="journal article" date="1992" name="Virology">
        <title>The nucleotide sequence of the infectious cloned DNA component of tobacco yellow dwarf virus reveals features of geminiviruses infecting monocotyledonous plants.</title>
        <authorList>
            <person name="Morris B.A.M."/>
            <person name="Richardson K.A."/>
            <person name="Haley A."/>
            <person name="Zhan X."/>
            <person name="Thomas J.E."/>
        </authorList>
    </citation>
    <scope>NUCLEOTIDE SEQUENCE [GENOMIC DNA]</scope>
</reference>
<protein>
    <recommendedName>
        <fullName>Replication-associated protein A</fullName>
        <shortName>RepA</shortName>
        <ecNumber>3.1.21.-</ecNumber>
    </recommendedName>
</protein>
<organismHost>
    <name type="scientific">Datura stramonium</name>
    <name type="common">Jimsonweed</name>
    <name type="synonym">Common thornapple</name>
    <dbReference type="NCBI Taxonomy" id="4076"/>
</organismHost>
<organismHost>
    <name type="scientific">Datura stramonium var. tatula</name>
    <dbReference type="NCBI Taxonomy" id="239686"/>
</organismHost>
<organismHost>
    <name type="scientific">Nicotiana tabacum</name>
    <name type="common">Common tobacco</name>
    <dbReference type="NCBI Taxonomy" id="4097"/>
</organismHost>
<organismHost>
    <name type="scientific">Solanum lycopersicum</name>
    <name type="common">Tomato</name>
    <name type="synonym">Lycopersicon esculentum</name>
    <dbReference type="NCBI Taxonomy" id="4081"/>
</organismHost>
<keyword id="KW-0010">Activator</keyword>
<keyword id="KW-0025">Alternative splicing</keyword>
<keyword id="KW-0190">Covalent protein-DNA linkage</keyword>
<keyword id="KW-0235">DNA replication</keyword>
<keyword id="KW-0238">DNA-binding</keyword>
<keyword id="KW-0255">Endonuclease</keyword>
<keyword id="KW-1078">G1/S host cell cycle checkpoint dysregulation by virus</keyword>
<keyword id="KW-1035">Host cytoplasm</keyword>
<keyword id="KW-1048">Host nucleus</keyword>
<keyword id="KW-0945">Host-virus interaction</keyword>
<keyword id="KW-0378">Hydrolase</keyword>
<keyword id="KW-0479">Metal-binding</keyword>
<keyword id="KW-1121">Modulation of host cell cycle by virus</keyword>
<keyword id="KW-0540">Nuclease</keyword>
<keyword id="KW-0547">Nucleotide-binding</keyword>
<keyword id="KW-0548">Nucleotidyltransferase</keyword>
<keyword id="KW-0678">Repressor</keyword>
<keyword id="KW-0808">Transferase</keyword>
<proteinExistence type="inferred from homology"/>
<sequence length="295" mass="33652">MPSAPQKTKSFRLQTKYVFLTYPRCSSSAENLRDFLWDKLSRFAIFFIAIATELHQDGTPHLHCLIQLDKRSNIRDPSFFDLEGNHPNIQPAKNSEQVLEYISKDGNVITKGEFKKHRVSPSKSDERWRTIIQTATSKEEYLDMIKDEFPHEWATKLQWLEYSANKLFPPQPEIYQATFTEEDLQCHEDLQLWRDQHLYHVSVDAYRLVHNVTLVEAHSDLVWMDDISRNLEGLEPGSPPSTSADQVVPERQHGPEASEGTITGMGPSTSLSMMTTRPTTSSTTSPSNSSHSGSN</sequence>
<name>REPA_TYDVA</name>
<dbReference type="EC" id="3.1.21.-"/>
<dbReference type="EMBL" id="M81103">
    <property type="protein sequence ID" value="AAA47950.1"/>
    <property type="molecule type" value="Genomic_DNA"/>
</dbReference>
<dbReference type="PIR" id="D42452">
    <property type="entry name" value="D42452"/>
</dbReference>
<dbReference type="SMR" id="P31617"/>
<dbReference type="Proteomes" id="UP000007548">
    <property type="component" value="Segment"/>
</dbReference>
<dbReference type="GO" id="GO:0030430">
    <property type="term" value="C:host cell cytoplasm"/>
    <property type="evidence" value="ECO:0007669"/>
    <property type="project" value="UniProtKB-SubCell"/>
</dbReference>
<dbReference type="GO" id="GO:0042025">
    <property type="term" value="C:host cell nucleus"/>
    <property type="evidence" value="ECO:0007669"/>
    <property type="project" value="UniProtKB-SubCell"/>
</dbReference>
<dbReference type="GO" id="GO:0003677">
    <property type="term" value="F:DNA binding"/>
    <property type="evidence" value="ECO:0007669"/>
    <property type="project" value="UniProtKB-KW"/>
</dbReference>
<dbReference type="GO" id="GO:0016888">
    <property type="term" value="F:endodeoxyribonuclease activity, producing 5'-phosphomonoesters"/>
    <property type="evidence" value="ECO:0007669"/>
    <property type="project" value="InterPro"/>
</dbReference>
<dbReference type="GO" id="GO:0046872">
    <property type="term" value="F:metal ion binding"/>
    <property type="evidence" value="ECO:0007669"/>
    <property type="project" value="UniProtKB-KW"/>
</dbReference>
<dbReference type="GO" id="GO:0000166">
    <property type="term" value="F:nucleotide binding"/>
    <property type="evidence" value="ECO:0007669"/>
    <property type="project" value="UniProtKB-KW"/>
</dbReference>
<dbReference type="GO" id="GO:0016779">
    <property type="term" value="F:nucleotidyltransferase activity"/>
    <property type="evidence" value="ECO:0007669"/>
    <property type="project" value="UniProtKB-KW"/>
</dbReference>
<dbReference type="GO" id="GO:0005198">
    <property type="term" value="F:structural molecule activity"/>
    <property type="evidence" value="ECO:0007669"/>
    <property type="project" value="InterPro"/>
</dbReference>
<dbReference type="GO" id="GO:0006260">
    <property type="term" value="P:DNA replication"/>
    <property type="evidence" value="ECO:0007669"/>
    <property type="project" value="UniProtKB-KW"/>
</dbReference>
<dbReference type="GO" id="GO:0039645">
    <property type="term" value="P:symbiont-mediated perturbation of host cell cycle G1/S transition checkpoint"/>
    <property type="evidence" value="ECO:0007669"/>
    <property type="project" value="UniProtKB-KW"/>
</dbReference>
<dbReference type="Gene3D" id="3.40.1310.20">
    <property type="match status" value="1"/>
</dbReference>
<dbReference type="InterPro" id="IPR049912">
    <property type="entry name" value="CRESS_DNA_REP"/>
</dbReference>
<dbReference type="InterPro" id="IPR001146">
    <property type="entry name" value="Gemini_AL1_MSV"/>
</dbReference>
<dbReference type="InterPro" id="IPR001191">
    <property type="entry name" value="Gemini_AL1_REP"/>
</dbReference>
<dbReference type="InterPro" id="IPR022692">
    <property type="entry name" value="Gemini_AL1_REP_central"/>
</dbReference>
<dbReference type="Pfam" id="PF00799">
    <property type="entry name" value="Gemini_AL1"/>
    <property type="match status" value="1"/>
</dbReference>
<dbReference type="Pfam" id="PF08283">
    <property type="entry name" value="Gemini_AL1_M"/>
    <property type="match status" value="1"/>
</dbReference>
<dbReference type="PRINTS" id="PR00227">
    <property type="entry name" value="GEMCOATAL1"/>
</dbReference>
<dbReference type="PRINTS" id="PR00229">
    <property type="entry name" value="GEMCOATMSVL1"/>
</dbReference>
<dbReference type="SUPFAM" id="SSF55464">
    <property type="entry name" value="Origin of replication-binding domain, RBD-like"/>
    <property type="match status" value="1"/>
</dbReference>
<dbReference type="PROSITE" id="PS52020">
    <property type="entry name" value="CRESS_DNA_REP"/>
    <property type="match status" value="1"/>
</dbReference>
<organism>
    <name type="scientific">Tobacco yellow dwarf virus (strain Australia)</name>
    <name type="common">TYDV</name>
    <dbReference type="NCBI Taxonomy" id="31599"/>
    <lineage>
        <taxon>Viruses</taxon>
        <taxon>Monodnaviria</taxon>
        <taxon>Shotokuvirae</taxon>
        <taxon>Cressdnaviricota</taxon>
        <taxon>Repensiviricetes</taxon>
        <taxon>Geplafuvirales</taxon>
        <taxon>Geminiviridae</taxon>
        <taxon>Mastrevirus</taxon>
        <taxon>Tobacco yellow dwarf virus</taxon>
    </lineage>
</organism>
<gene>
    <name type="ORF">C1</name>
</gene>
<accession>P31617</accession>